<dbReference type="EC" id="4.1.3.40" evidence="1"/>
<dbReference type="EMBL" id="AE016795">
    <property type="protein sequence ID" value="AAO09634.2"/>
    <property type="status" value="ALT_INIT"/>
    <property type="molecule type" value="Genomic_DNA"/>
</dbReference>
<dbReference type="RefSeq" id="WP_013570943.1">
    <property type="nucleotide sequence ID" value="NC_004459.3"/>
</dbReference>
<dbReference type="SMR" id="Q8DD50"/>
<dbReference type="KEGG" id="vvu:VV1_1163"/>
<dbReference type="HOGENOM" id="CLU_096824_1_1_6"/>
<dbReference type="UniPathway" id="UPA00232"/>
<dbReference type="Proteomes" id="UP000002275">
    <property type="component" value="Chromosome 1"/>
</dbReference>
<dbReference type="GO" id="GO:0005829">
    <property type="term" value="C:cytosol"/>
    <property type="evidence" value="ECO:0007669"/>
    <property type="project" value="TreeGrafter"/>
</dbReference>
<dbReference type="GO" id="GO:0008813">
    <property type="term" value="F:chorismate lyase activity"/>
    <property type="evidence" value="ECO:0007669"/>
    <property type="project" value="UniProtKB-UniRule"/>
</dbReference>
<dbReference type="GO" id="GO:0042866">
    <property type="term" value="P:pyruvate biosynthetic process"/>
    <property type="evidence" value="ECO:0007669"/>
    <property type="project" value="UniProtKB-UniRule"/>
</dbReference>
<dbReference type="GO" id="GO:0006744">
    <property type="term" value="P:ubiquinone biosynthetic process"/>
    <property type="evidence" value="ECO:0007669"/>
    <property type="project" value="UniProtKB-UniRule"/>
</dbReference>
<dbReference type="Gene3D" id="3.40.1410.10">
    <property type="entry name" value="Chorismate lyase-like"/>
    <property type="match status" value="1"/>
</dbReference>
<dbReference type="HAMAP" id="MF_01632">
    <property type="entry name" value="UbiC"/>
    <property type="match status" value="1"/>
</dbReference>
<dbReference type="InterPro" id="IPR007440">
    <property type="entry name" value="Chorismate--pyruvate_lyase"/>
</dbReference>
<dbReference type="InterPro" id="IPR028978">
    <property type="entry name" value="Chorismate_lyase_/UTRA_dom_sf"/>
</dbReference>
<dbReference type="PANTHER" id="PTHR38683">
    <property type="entry name" value="CHORISMATE PYRUVATE-LYASE"/>
    <property type="match status" value="1"/>
</dbReference>
<dbReference type="PANTHER" id="PTHR38683:SF1">
    <property type="entry name" value="CHORISMATE PYRUVATE-LYASE"/>
    <property type="match status" value="1"/>
</dbReference>
<dbReference type="Pfam" id="PF04345">
    <property type="entry name" value="Chor_lyase"/>
    <property type="match status" value="1"/>
</dbReference>
<dbReference type="SUPFAM" id="SSF64288">
    <property type="entry name" value="Chorismate lyase-like"/>
    <property type="match status" value="1"/>
</dbReference>
<proteinExistence type="inferred from homology"/>
<comment type="function">
    <text evidence="1">Removes the pyruvyl group from chorismate, with concomitant aromatization of the ring, to provide 4-hydroxybenzoate (4HB) for the ubiquinone pathway.</text>
</comment>
<comment type="catalytic activity">
    <reaction evidence="1">
        <text>chorismate = 4-hydroxybenzoate + pyruvate</text>
        <dbReference type="Rhea" id="RHEA:16505"/>
        <dbReference type="ChEBI" id="CHEBI:15361"/>
        <dbReference type="ChEBI" id="CHEBI:17879"/>
        <dbReference type="ChEBI" id="CHEBI:29748"/>
        <dbReference type="EC" id="4.1.3.40"/>
    </reaction>
</comment>
<comment type="pathway">
    <text evidence="1">Cofactor biosynthesis; ubiquinone biosynthesis.</text>
</comment>
<comment type="subcellular location">
    <subcellularLocation>
        <location evidence="1">Cytoplasm</location>
    </subcellularLocation>
</comment>
<comment type="similarity">
    <text evidence="1">Belongs to the UbiC family.</text>
</comment>
<comment type="sequence caution" evidence="2">
    <conflict type="erroneous initiation">
        <sequence resource="EMBL-CDS" id="AAO09634"/>
    </conflict>
    <text>Extended N-terminus.</text>
</comment>
<keyword id="KW-0963">Cytoplasm</keyword>
<keyword id="KW-0456">Lyase</keyword>
<keyword id="KW-0670">Pyruvate</keyword>
<keyword id="KW-0831">Ubiquinone biosynthesis</keyword>
<gene>
    <name evidence="1" type="primary">ubiC</name>
    <name type="ordered locus">VV1_1163</name>
</gene>
<protein>
    <recommendedName>
        <fullName evidence="1">Probable chorismate pyruvate-lyase</fullName>
        <shortName evidence="1">CL</shortName>
        <shortName evidence="1">CPL</shortName>
        <ecNumber evidence="1">4.1.3.40</ecNumber>
    </recommendedName>
</protein>
<organism>
    <name type="scientific">Vibrio vulnificus (strain CMCP6)</name>
    <dbReference type="NCBI Taxonomy" id="216895"/>
    <lineage>
        <taxon>Bacteria</taxon>
        <taxon>Pseudomonadati</taxon>
        <taxon>Pseudomonadota</taxon>
        <taxon>Gammaproteobacteria</taxon>
        <taxon>Vibrionales</taxon>
        <taxon>Vibrionaceae</taxon>
        <taxon>Vibrio</taxon>
    </lineage>
</organism>
<reference key="1">
    <citation type="submission" date="2002-12" db="EMBL/GenBank/DDBJ databases">
        <title>Complete genome sequence of Vibrio vulnificus CMCP6.</title>
        <authorList>
            <person name="Rhee J.H."/>
            <person name="Kim S.Y."/>
            <person name="Chung S.S."/>
            <person name="Kim J.J."/>
            <person name="Moon Y.H."/>
            <person name="Jeong H."/>
            <person name="Choy H.E."/>
        </authorList>
    </citation>
    <scope>NUCLEOTIDE SEQUENCE [LARGE SCALE GENOMIC DNA]</scope>
    <source>
        <strain>CMCP6</strain>
    </source>
</reference>
<accession>Q8DD50</accession>
<evidence type="ECO:0000255" key="1">
    <source>
        <dbReference type="HAMAP-Rule" id="MF_01632"/>
    </source>
</evidence>
<evidence type="ECO:0000305" key="2"/>
<sequence>MNQPNSLYLALLIEAKWQNPEDFHFSSDFAKHWLLEQGSLSRRLARHCQHLTVELMRNEKSGMGQLTRQETQGLSPEICLIREVVLSGDQTPWVLGRTLIPETTLADQPYDLATLGDIPLGLTVFSAEQVERDALQVAWIETPQGRLLARRSRLWMNHKPMLVAELFLPDAPIYSRESV</sequence>
<name>UBIC_VIBVU</name>
<feature type="chain" id="PRO_0000240583" description="Probable chorismate pyruvate-lyase">
    <location>
        <begin position="1"/>
        <end position="179"/>
    </location>
</feature>
<feature type="binding site" evidence="1">
    <location>
        <position position="82"/>
    </location>
    <ligand>
        <name>substrate</name>
    </ligand>
</feature>
<feature type="binding site" evidence="1">
    <location>
        <position position="120"/>
    </location>
    <ligand>
        <name>substrate</name>
    </ligand>
</feature>
<feature type="binding site" evidence="1">
    <location>
        <position position="165"/>
    </location>
    <ligand>
        <name>substrate</name>
    </ligand>
</feature>